<proteinExistence type="evidence at transcript level"/>
<organism>
    <name type="scientific">Spodoptera frugiperda</name>
    <name type="common">Fall armyworm</name>
    <dbReference type="NCBI Taxonomy" id="7108"/>
    <lineage>
        <taxon>Eukaryota</taxon>
        <taxon>Metazoa</taxon>
        <taxon>Ecdysozoa</taxon>
        <taxon>Arthropoda</taxon>
        <taxon>Hexapoda</taxon>
        <taxon>Insecta</taxon>
        <taxon>Pterygota</taxon>
        <taxon>Neoptera</taxon>
        <taxon>Endopterygota</taxon>
        <taxon>Lepidoptera</taxon>
        <taxon>Glossata</taxon>
        <taxon>Ditrysia</taxon>
        <taxon>Noctuoidea</taxon>
        <taxon>Noctuidae</taxon>
        <taxon>Amphipyrinae</taxon>
        <taxon>Spodoptera</taxon>
    </lineage>
</organism>
<gene>
    <name type="primary">RpL8</name>
</gene>
<protein>
    <recommendedName>
        <fullName evidence="2">Large ribosomal subunit protein uL2</fullName>
    </recommendedName>
    <alternativeName>
        <fullName>60S ribosomal protein L8</fullName>
    </alternativeName>
</protein>
<reference key="1">
    <citation type="journal article" date="2003" name="Bioinformatics">
        <title>Annotation pattern of ESTs from Spodoptera frugiperda Sf9 cells and analysis of the ribosomal protein genes reveal insect-specific features and unexpectedly low codon usage bias.</title>
        <authorList>
            <person name="Landais I."/>
            <person name="Ogliastro M."/>
            <person name="Mita K."/>
            <person name="Nohata J."/>
            <person name="Lopez-Ferber M."/>
            <person name="Duonor-Cerutti M."/>
            <person name="Shimada T."/>
            <person name="Fournier P."/>
            <person name="Devauchelle G."/>
        </authorList>
    </citation>
    <scope>NUCLEOTIDE SEQUENCE [LARGE SCALE MRNA]</scope>
</reference>
<accession>Q95V39</accession>
<feature type="chain" id="PRO_0000129756" description="Large ribosomal subunit protein uL2">
    <location>
        <begin position="1"/>
        <end position="257"/>
    </location>
</feature>
<feature type="region of interest" description="Disordered" evidence="1">
    <location>
        <begin position="210"/>
        <end position="231"/>
    </location>
</feature>
<dbReference type="EMBL" id="AF429973">
    <property type="protein sequence ID" value="AAL26575.1"/>
    <property type="molecule type" value="mRNA"/>
</dbReference>
<dbReference type="SMR" id="Q95V39"/>
<dbReference type="EnsemblMetazoa" id="XM_035573747.2">
    <property type="protein sequence ID" value="XP_035429640.1"/>
    <property type="gene ID" value="LOC118262419"/>
</dbReference>
<dbReference type="OrthoDB" id="10267824at2759"/>
<dbReference type="Proteomes" id="UP000829999">
    <property type="component" value="Unplaced"/>
</dbReference>
<dbReference type="GO" id="GO:0022625">
    <property type="term" value="C:cytosolic large ribosomal subunit"/>
    <property type="evidence" value="ECO:0007669"/>
    <property type="project" value="TreeGrafter"/>
</dbReference>
<dbReference type="GO" id="GO:0019843">
    <property type="term" value="F:rRNA binding"/>
    <property type="evidence" value="ECO:0007669"/>
    <property type="project" value="UniProtKB-KW"/>
</dbReference>
<dbReference type="GO" id="GO:0003735">
    <property type="term" value="F:structural constituent of ribosome"/>
    <property type="evidence" value="ECO:0007669"/>
    <property type="project" value="InterPro"/>
</dbReference>
<dbReference type="GO" id="GO:0002181">
    <property type="term" value="P:cytoplasmic translation"/>
    <property type="evidence" value="ECO:0007669"/>
    <property type="project" value="TreeGrafter"/>
</dbReference>
<dbReference type="FunFam" id="2.40.50.140:FF:000020">
    <property type="entry name" value="60S ribosomal protein L2"/>
    <property type="match status" value="1"/>
</dbReference>
<dbReference type="FunFam" id="4.10.950.10:FF:000002">
    <property type="entry name" value="60S ribosomal protein L2"/>
    <property type="match status" value="1"/>
</dbReference>
<dbReference type="FunFam" id="2.30.30.30:FF:000006">
    <property type="entry name" value="60S ribosomal protein L8"/>
    <property type="match status" value="1"/>
</dbReference>
<dbReference type="Gene3D" id="2.30.30.30">
    <property type="match status" value="1"/>
</dbReference>
<dbReference type="Gene3D" id="2.40.50.140">
    <property type="entry name" value="Nucleic acid-binding proteins"/>
    <property type="match status" value="1"/>
</dbReference>
<dbReference type="Gene3D" id="4.10.950.10">
    <property type="entry name" value="Ribosomal protein L2, domain 3"/>
    <property type="match status" value="1"/>
</dbReference>
<dbReference type="InterPro" id="IPR012340">
    <property type="entry name" value="NA-bd_OB-fold"/>
</dbReference>
<dbReference type="InterPro" id="IPR014722">
    <property type="entry name" value="Rib_uL2_dom2"/>
</dbReference>
<dbReference type="InterPro" id="IPR002171">
    <property type="entry name" value="Ribosomal_uL2"/>
</dbReference>
<dbReference type="InterPro" id="IPR023672">
    <property type="entry name" value="Ribosomal_uL2_arc_euk"/>
</dbReference>
<dbReference type="InterPro" id="IPR022669">
    <property type="entry name" value="Ribosomal_uL2_C"/>
</dbReference>
<dbReference type="InterPro" id="IPR022671">
    <property type="entry name" value="Ribosomal_uL2_CS"/>
</dbReference>
<dbReference type="InterPro" id="IPR014726">
    <property type="entry name" value="Ribosomal_uL2_dom3"/>
</dbReference>
<dbReference type="InterPro" id="IPR022666">
    <property type="entry name" value="Ribosomal_uL2_RNA-bd_dom"/>
</dbReference>
<dbReference type="InterPro" id="IPR008991">
    <property type="entry name" value="Translation_prot_SH3-like_sf"/>
</dbReference>
<dbReference type="NCBIfam" id="NF007180">
    <property type="entry name" value="PRK09612.1"/>
    <property type="match status" value="1"/>
</dbReference>
<dbReference type="PANTHER" id="PTHR13691:SF16">
    <property type="entry name" value="LARGE RIBOSOMAL SUBUNIT PROTEIN UL2"/>
    <property type="match status" value="1"/>
</dbReference>
<dbReference type="PANTHER" id="PTHR13691">
    <property type="entry name" value="RIBOSOMAL PROTEIN L2"/>
    <property type="match status" value="1"/>
</dbReference>
<dbReference type="Pfam" id="PF00181">
    <property type="entry name" value="Ribosomal_L2"/>
    <property type="match status" value="1"/>
</dbReference>
<dbReference type="Pfam" id="PF03947">
    <property type="entry name" value="Ribosomal_L2_C"/>
    <property type="match status" value="1"/>
</dbReference>
<dbReference type="PIRSF" id="PIRSF002158">
    <property type="entry name" value="Ribosomal_L2"/>
    <property type="match status" value="1"/>
</dbReference>
<dbReference type="SMART" id="SM01383">
    <property type="entry name" value="Ribosomal_L2"/>
    <property type="match status" value="1"/>
</dbReference>
<dbReference type="SMART" id="SM01382">
    <property type="entry name" value="Ribosomal_L2_C"/>
    <property type="match status" value="1"/>
</dbReference>
<dbReference type="SUPFAM" id="SSF50249">
    <property type="entry name" value="Nucleic acid-binding proteins"/>
    <property type="match status" value="1"/>
</dbReference>
<dbReference type="SUPFAM" id="SSF50104">
    <property type="entry name" value="Translation proteins SH3-like domain"/>
    <property type="match status" value="1"/>
</dbReference>
<dbReference type="PROSITE" id="PS00467">
    <property type="entry name" value="RIBOSOMAL_L2"/>
    <property type="match status" value="1"/>
</dbReference>
<keyword id="KW-0963">Cytoplasm</keyword>
<keyword id="KW-0687">Ribonucleoprotein</keyword>
<keyword id="KW-0689">Ribosomal protein</keyword>
<keyword id="KW-0694">RNA-binding</keyword>
<keyword id="KW-0699">rRNA-binding</keyword>
<name>RL8_SPOFR</name>
<sequence length="257" mass="27919">MGRVIRAQRKGAGSVFVSHTKKRKGAPKLRSLDYAERHGYIKGVVKDIIHDPGRGAPLAVVHFRDPYKFKTRKELFIAPEGLYTGQFVYCGKKATLEVGNVMPVGAMPEGTIVCNLEEKMGDRGRLARASGNFATVIGHNPDAKRTRVKLPSGAKKVLPSSNRGMVGIVAGGGRIDKPILKAGRAYHKYKVKRNCWPYVRGVAMNPVEHPHGGGNHQHIGKASTVKRGTSAGRKVGLIAARRTGRIRGGKTDTKKET</sequence>
<comment type="subcellular location">
    <subcellularLocation>
        <location>Cytoplasm</location>
    </subcellularLocation>
</comment>
<comment type="similarity">
    <text evidence="2">Belongs to the universal ribosomal protein uL2 family.</text>
</comment>
<evidence type="ECO:0000256" key="1">
    <source>
        <dbReference type="SAM" id="MobiDB-lite"/>
    </source>
</evidence>
<evidence type="ECO:0000305" key="2"/>